<comment type="function">
    <text evidence="1">O-methyltransferase that catalyzes the 2 O-methylation steps in the ubiquinone biosynthetic pathway.</text>
</comment>
<comment type="catalytic activity">
    <reaction evidence="1">
        <text>a 3-demethylubiquinol + S-adenosyl-L-methionine = a ubiquinol + S-adenosyl-L-homocysteine + H(+)</text>
        <dbReference type="Rhea" id="RHEA:44380"/>
        <dbReference type="Rhea" id="RHEA-COMP:9566"/>
        <dbReference type="Rhea" id="RHEA-COMP:10914"/>
        <dbReference type="ChEBI" id="CHEBI:15378"/>
        <dbReference type="ChEBI" id="CHEBI:17976"/>
        <dbReference type="ChEBI" id="CHEBI:57856"/>
        <dbReference type="ChEBI" id="CHEBI:59789"/>
        <dbReference type="ChEBI" id="CHEBI:84422"/>
        <dbReference type="EC" id="2.1.1.64"/>
    </reaction>
</comment>
<comment type="catalytic activity">
    <reaction evidence="1">
        <text>a 3-(all-trans-polyprenyl)benzene-1,2-diol + S-adenosyl-L-methionine = a 2-methoxy-6-(all-trans-polyprenyl)phenol + S-adenosyl-L-homocysteine + H(+)</text>
        <dbReference type="Rhea" id="RHEA:31411"/>
        <dbReference type="Rhea" id="RHEA-COMP:9550"/>
        <dbReference type="Rhea" id="RHEA-COMP:9551"/>
        <dbReference type="ChEBI" id="CHEBI:15378"/>
        <dbReference type="ChEBI" id="CHEBI:57856"/>
        <dbReference type="ChEBI" id="CHEBI:59789"/>
        <dbReference type="ChEBI" id="CHEBI:62729"/>
        <dbReference type="ChEBI" id="CHEBI:62731"/>
        <dbReference type="EC" id="2.1.1.222"/>
    </reaction>
</comment>
<comment type="pathway">
    <text evidence="1">Cofactor biosynthesis; ubiquinone biosynthesis.</text>
</comment>
<comment type="similarity">
    <text evidence="1">Belongs to the methyltransferase superfamily. UbiG/COQ3 family.</text>
</comment>
<feature type="chain" id="PRO_1000206358" description="Ubiquinone biosynthesis O-methyltransferase">
    <location>
        <begin position="1"/>
        <end position="232"/>
    </location>
</feature>
<feature type="binding site" evidence="1">
    <location>
        <position position="36"/>
    </location>
    <ligand>
        <name>S-adenosyl-L-methionine</name>
        <dbReference type="ChEBI" id="CHEBI:59789"/>
    </ligand>
</feature>
<feature type="binding site" evidence="1">
    <location>
        <position position="55"/>
    </location>
    <ligand>
        <name>S-adenosyl-L-methionine</name>
        <dbReference type="ChEBI" id="CHEBI:59789"/>
    </ligand>
</feature>
<feature type="binding site" evidence="1">
    <location>
        <position position="76"/>
    </location>
    <ligand>
        <name>S-adenosyl-L-methionine</name>
        <dbReference type="ChEBI" id="CHEBI:59789"/>
    </ligand>
</feature>
<feature type="binding site" evidence="1">
    <location>
        <position position="120"/>
    </location>
    <ligand>
        <name>S-adenosyl-L-methionine</name>
        <dbReference type="ChEBI" id="CHEBI:59789"/>
    </ligand>
</feature>
<reference key="1">
    <citation type="journal article" date="2009" name="Genome Biol.">
        <title>Genomic and genetic analyses of diversity and plant interactions of Pseudomonas fluorescens.</title>
        <authorList>
            <person name="Silby M.W."/>
            <person name="Cerdeno-Tarraga A.M."/>
            <person name="Vernikos G.S."/>
            <person name="Giddens S.R."/>
            <person name="Jackson R.W."/>
            <person name="Preston G.M."/>
            <person name="Zhang X.-X."/>
            <person name="Moon C.D."/>
            <person name="Gehrig S.M."/>
            <person name="Godfrey S.A.C."/>
            <person name="Knight C.G."/>
            <person name="Malone J.G."/>
            <person name="Robinson Z."/>
            <person name="Spiers A.J."/>
            <person name="Harris S."/>
            <person name="Challis G.L."/>
            <person name="Yaxley A.M."/>
            <person name="Harris D."/>
            <person name="Seeger K."/>
            <person name="Murphy L."/>
            <person name="Rutter S."/>
            <person name="Squares R."/>
            <person name="Quail M.A."/>
            <person name="Saunders E."/>
            <person name="Mavromatis K."/>
            <person name="Brettin T.S."/>
            <person name="Bentley S.D."/>
            <person name="Hothersall J."/>
            <person name="Stephens E."/>
            <person name="Thomas C.M."/>
            <person name="Parkhill J."/>
            <person name="Levy S.B."/>
            <person name="Rainey P.B."/>
            <person name="Thomson N.R."/>
        </authorList>
    </citation>
    <scope>NUCLEOTIDE SEQUENCE [LARGE SCALE GENOMIC DNA]</scope>
    <source>
        <strain>SBW25</strain>
    </source>
</reference>
<dbReference type="EC" id="2.1.1.222" evidence="1"/>
<dbReference type="EC" id="2.1.1.64" evidence="1"/>
<dbReference type="EMBL" id="AM181176">
    <property type="protein sequence ID" value="CAY47889.1"/>
    <property type="molecule type" value="Genomic_DNA"/>
</dbReference>
<dbReference type="RefSeq" id="WP_003172645.1">
    <property type="nucleotide sequence ID" value="NC_012660.1"/>
</dbReference>
<dbReference type="SMR" id="C3K6J1"/>
<dbReference type="STRING" id="294.SRM1_04028"/>
<dbReference type="GeneID" id="97824699"/>
<dbReference type="eggNOG" id="COG2227">
    <property type="taxonomic scope" value="Bacteria"/>
</dbReference>
<dbReference type="HOGENOM" id="CLU_042432_5_0_6"/>
<dbReference type="OrthoDB" id="9801538at2"/>
<dbReference type="UniPathway" id="UPA00232"/>
<dbReference type="GO" id="GO:0102208">
    <property type="term" value="F:2-polyprenyl-6-hydroxyphenol methylase activity"/>
    <property type="evidence" value="ECO:0007669"/>
    <property type="project" value="UniProtKB-EC"/>
</dbReference>
<dbReference type="GO" id="GO:0061542">
    <property type="term" value="F:3-demethylubiquinol 3-O-methyltransferase activity"/>
    <property type="evidence" value="ECO:0007669"/>
    <property type="project" value="UniProtKB-UniRule"/>
</dbReference>
<dbReference type="GO" id="GO:0010420">
    <property type="term" value="F:polyprenyldihydroxybenzoate methyltransferase activity"/>
    <property type="evidence" value="ECO:0007669"/>
    <property type="project" value="InterPro"/>
</dbReference>
<dbReference type="GO" id="GO:0032259">
    <property type="term" value="P:methylation"/>
    <property type="evidence" value="ECO:0007669"/>
    <property type="project" value="UniProtKB-KW"/>
</dbReference>
<dbReference type="CDD" id="cd02440">
    <property type="entry name" value="AdoMet_MTases"/>
    <property type="match status" value="1"/>
</dbReference>
<dbReference type="FunFam" id="3.40.50.150:FF:000028">
    <property type="entry name" value="Ubiquinone biosynthesis O-methyltransferase"/>
    <property type="match status" value="1"/>
</dbReference>
<dbReference type="Gene3D" id="3.40.50.150">
    <property type="entry name" value="Vaccinia Virus protein VP39"/>
    <property type="match status" value="1"/>
</dbReference>
<dbReference type="HAMAP" id="MF_00472">
    <property type="entry name" value="UbiG"/>
    <property type="match status" value="1"/>
</dbReference>
<dbReference type="InterPro" id="IPR029063">
    <property type="entry name" value="SAM-dependent_MTases_sf"/>
</dbReference>
<dbReference type="InterPro" id="IPR010233">
    <property type="entry name" value="UbiG_MeTrfase"/>
</dbReference>
<dbReference type="NCBIfam" id="TIGR01983">
    <property type="entry name" value="UbiG"/>
    <property type="match status" value="1"/>
</dbReference>
<dbReference type="PANTHER" id="PTHR43464">
    <property type="entry name" value="METHYLTRANSFERASE"/>
    <property type="match status" value="1"/>
</dbReference>
<dbReference type="PANTHER" id="PTHR43464:SF19">
    <property type="entry name" value="UBIQUINONE BIOSYNTHESIS O-METHYLTRANSFERASE, MITOCHONDRIAL"/>
    <property type="match status" value="1"/>
</dbReference>
<dbReference type="Pfam" id="PF13489">
    <property type="entry name" value="Methyltransf_23"/>
    <property type="match status" value="1"/>
</dbReference>
<dbReference type="SUPFAM" id="SSF53335">
    <property type="entry name" value="S-adenosyl-L-methionine-dependent methyltransferases"/>
    <property type="match status" value="1"/>
</dbReference>
<accession>C3K6J1</accession>
<organism>
    <name type="scientific">Pseudomonas fluorescens (strain SBW25)</name>
    <dbReference type="NCBI Taxonomy" id="216595"/>
    <lineage>
        <taxon>Bacteria</taxon>
        <taxon>Pseudomonadati</taxon>
        <taxon>Pseudomonadota</taxon>
        <taxon>Gammaproteobacteria</taxon>
        <taxon>Pseudomonadales</taxon>
        <taxon>Pseudomonadaceae</taxon>
        <taxon>Pseudomonas</taxon>
    </lineage>
</organism>
<gene>
    <name evidence="1" type="primary">ubiG</name>
    <name type="ordered locus">PFLU_1639</name>
</gene>
<sequence length="232" mass="26057">MSNVDHAEIAKFEALAHRWWDRESEFKPLHDINPLRVNWIDERVNLAGKKVLDVGCGGGILSEAMAQRGATVMGIDMGEAPLAVAQLHQLESGVSVEYRQITAEALAEEMPEQFDVVTCLEMLEHVPDPSSVIRACFRMVKPGGQVFFSTINRNPKAYLFAIIGAEYIMKLLPRGTHDFKKFIRPSELGAWSRQAGLTVKDIIGLTYNPLTKHYKLASDVDVNYMIQTLREE</sequence>
<evidence type="ECO:0000255" key="1">
    <source>
        <dbReference type="HAMAP-Rule" id="MF_00472"/>
    </source>
</evidence>
<keyword id="KW-0489">Methyltransferase</keyword>
<keyword id="KW-0949">S-adenosyl-L-methionine</keyword>
<keyword id="KW-0808">Transferase</keyword>
<keyword id="KW-0831">Ubiquinone biosynthesis</keyword>
<name>UBIG_PSEFS</name>
<protein>
    <recommendedName>
        <fullName evidence="1">Ubiquinone biosynthesis O-methyltransferase</fullName>
    </recommendedName>
    <alternativeName>
        <fullName evidence="1">2-polyprenyl-6-hydroxyphenol methylase</fullName>
        <ecNumber evidence="1">2.1.1.222</ecNumber>
    </alternativeName>
    <alternativeName>
        <fullName evidence="1">3-demethylubiquinone 3-O-methyltransferase</fullName>
        <ecNumber evidence="1">2.1.1.64</ecNumber>
    </alternativeName>
</protein>
<proteinExistence type="inferred from homology"/>